<protein>
    <recommendedName>
        <fullName evidence="1">Large ribosomal subunit protein uL13</fullName>
    </recommendedName>
    <alternativeName>
        <fullName evidence="2">50S ribosomal protein L13</fullName>
    </alternativeName>
</protein>
<comment type="function">
    <text evidence="1">This protein is one of the early assembly proteins of the 50S ribosomal subunit, although it is not seen to bind rRNA by itself. It is important during the early stages of 50S assembly.</text>
</comment>
<comment type="subunit">
    <text evidence="1">Part of the 50S ribosomal subunit.</text>
</comment>
<comment type="similarity">
    <text evidence="1">Belongs to the universal ribosomal protein uL13 family.</text>
</comment>
<evidence type="ECO:0000255" key="1">
    <source>
        <dbReference type="HAMAP-Rule" id="MF_01366"/>
    </source>
</evidence>
<evidence type="ECO:0000305" key="2"/>
<feature type="chain" id="PRO_1000144178" description="Large ribosomal subunit protein uL13">
    <location>
        <begin position="1"/>
        <end position="142"/>
    </location>
</feature>
<sequence>MKTFTAKPETVKRDWYVVDATGKTLGRLATELARRLRGKHKAEYTPHVDTGDYIIVLNADKVAVTGNKRTDKVYYHHTGHIGGIKQATFEEMIARRPERVIEIAVKGMLPKGPLGRAMFRKLKVYAGNEHNHAAQQPQVLDI</sequence>
<gene>
    <name evidence="1" type="primary">rplM</name>
    <name type="ordered locus">SNSL254_A3608</name>
</gene>
<reference key="1">
    <citation type="journal article" date="2011" name="J. Bacteriol.">
        <title>Comparative genomics of 28 Salmonella enterica isolates: evidence for CRISPR-mediated adaptive sublineage evolution.</title>
        <authorList>
            <person name="Fricke W.F."/>
            <person name="Mammel M.K."/>
            <person name="McDermott P.F."/>
            <person name="Tartera C."/>
            <person name="White D.G."/>
            <person name="Leclerc J.E."/>
            <person name="Ravel J."/>
            <person name="Cebula T.A."/>
        </authorList>
    </citation>
    <scope>NUCLEOTIDE SEQUENCE [LARGE SCALE GENOMIC DNA]</scope>
    <source>
        <strain>SL254</strain>
    </source>
</reference>
<name>RL13_SALNS</name>
<organism>
    <name type="scientific">Salmonella newport (strain SL254)</name>
    <dbReference type="NCBI Taxonomy" id="423368"/>
    <lineage>
        <taxon>Bacteria</taxon>
        <taxon>Pseudomonadati</taxon>
        <taxon>Pseudomonadota</taxon>
        <taxon>Gammaproteobacteria</taxon>
        <taxon>Enterobacterales</taxon>
        <taxon>Enterobacteriaceae</taxon>
        <taxon>Salmonella</taxon>
    </lineage>
</organism>
<accession>B4T755</accession>
<keyword id="KW-0687">Ribonucleoprotein</keyword>
<keyword id="KW-0689">Ribosomal protein</keyword>
<dbReference type="EMBL" id="CP001113">
    <property type="protein sequence ID" value="ACF61305.1"/>
    <property type="molecule type" value="Genomic_DNA"/>
</dbReference>
<dbReference type="RefSeq" id="WP_000847559.1">
    <property type="nucleotide sequence ID" value="NZ_CCMR01000001.1"/>
</dbReference>
<dbReference type="SMR" id="B4T755"/>
<dbReference type="GeneID" id="89518067"/>
<dbReference type="KEGG" id="see:SNSL254_A3608"/>
<dbReference type="HOGENOM" id="CLU_082184_2_2_6"/>
<dbReference type="Proteomes" id="UP000008824">
    <property type="component" value="Chromosome"/>
</dbReference>
<dbReference type="GO" id="GO:0022625">
    <property type="term" value="C:cytosolic large ribosomal subunit"/>
    <property type="evidence" value="ECO:0007669"/>
    <property type="project" value="TreeGrafter"/>
</dbReference>
<dbReference type="GO" id="GO:0003729">
    <property type="term" value="F:mRNA binding"/>
    <property type="evidence" value="ECO:0007669"/>
    <property type="project" value="TreeGrafter"/>
</dbReference>
<dbReference type="GO" id="GO:0003735">
    <property type="term" value="F:structural constituent of ribosome"/>
    <property type="evidence" value="ECO:0007669"/>
    <property type="project" value="InterPro"/>
</dbReference>
<dbReference type="GO" id="GO:0017148">
    <property type="term" value="P:negative regulation of translation"/>
    <property type="evidence" value="ECO:0007669"/>
    <property type="project" value="TreeGrafter"/>
</dbReference>
<dbReference type="GO" id="GO:0006412">
    <property type="term" value="P:translation"/>
    <property type="evidence" value="ECO:0007669"/>
    <property type="project" value="UniProtKB-UniRule"/>
</dbReference>
<dbReference type="CDD" id="cd00392">
    <property type="entry name" value="Ribosomal_L13"/>
    <property type="match status" value="1"/>
</dbReference>
<dbReference type="FunFam" id="3.90.1180.10:FF:000001">
    <property type="entry name" value="50S ribosomal protein L13"/>
    <property type="match status" value="1"/>
</dbReference>
<dbReference type="Gene3D" id="3.90.1180.10">
    <property type="entry name" value="Ribosomal protein L13"/>
    <property type="match status" value="1"/>
</dbReference>
<dbReference type="HAMAP" id="MF_01366">
    <property type="entry name" value="Ribosomal_uL13"/>
    <property type="match status" value="1"/>
</dbReference>
<dbReference type="InterPro" id="IPR005822">
    <property type="entry name" value="Ribosomal_uL13"/>
</dbReference>
<dbReference type="InterPro" id="IPR005823">
    <property type="entry name" value="Ribosomal_uL13_bac-type"/>
</dbReference>
<dbReference type="InterPro" id="IPR023563">
    <property type="entry name" value="Ribosomal_uL13_CS"/>
</dbReference>
<dbReference type="InterPro" id="IPR036899">
    <property type="entry name" value="Ribosomal_uL13_sf"/>
</dbReference>
<dbReference type="NCBIfam" id="TIGR01066">
    <property type="entry name" value="rplM_bact"/>
    <property type="match status" value="1"/>
</dbReference>
<dbReference type="PANTHER" id="PTHR11545:SF2">
    <property type="entry name" value="LARGE RIBOSOMAL SUBUNIT PROTEIN UL13M"/>
    <property type="match status" value="1"/>
</dbReference>
<dbReference type="PANTHER" id="PTHR11545">
    <property type="entry name" value="RIBOSOMAL PROTEIN L13"/>
    <property type="match status" value="1"/>
</dbReference>
<dbReference type="Pfam" id="PF00572">
    <property type="entry name" value="Ribosomal_L13"/>
    <property type="match status" value="1"/>
</dbReference>
<dbReference type="PIRSF" id="PIRSF002181">
    <property type="entry name" value="Ribosomal_L13"/>
    <property type="match status" value="1"/>
</dbReference>
<dbReference type="SUPFAM" id="SSF52161">
    <property type="entry name" value="Ribosomal protein L13"/>
    <property type="match status" value="1"/>
</dbReference>
<dbReference type="PROSITE" id="PS00783">
    <property type="entry name" value="RIBOSOMAL_L13"/>
    <property type="match status" value="1"/>
</dbReference>
<proteinExistence type="inferred from homology"/>